<protein>
    <recommendedName>
        <fullName evidence="1">Glutamyl-tRNA reductase</fullName>
        <shortName evidence="1">GluTR</shortName>
        <ecNumber evidence="1">1.2.1.70</ecNumber>
    </recommendedName>
</protein>
<sequence>MHILVVSVNYRTAPVEFREKLTFQAAELERAMTTLQNQKSVLENVIVSTCNRTEIYAVVDQLHTGRYYIKKFLADWFQLEIEEVAPYLTIFEQDGAIDHLFRVTCGLDSMVVGETQILGQIKDSFLEAQQVKATGTIFNELFKQVITLAKRAHSETTIGESAMSVSYAAVELGKKIFGELTDCHVLILGAGKMGELALQNLYGSGARKVTVMNRTLSKAEIMAEKYMGHAKPLSELQCALLEADILISSTGASDYVITKEMMTKVEKMRSGRPLFMVDIAVPRDIDPAIDELEGSFLYDIDDLQGVVEANRAERLKEAEKIQFMIEEEIVLFKTWLSTLGVVPLISALRDKALAIQSETMESLERKIPNLSDRERKVISKHTKSIINQLLKDPILVAKEIAAEEGADEKLALFAKIFDLEMEDVESRAEEVEHKRVWTPSVPSL</sequence>
<comment type="function">
    <text evidence="1">Catalyzes the NADPH-dependent reduction of glutamyl-tRNA(Glu) to glutamate 1-semialdehyde (GSA).</text>
</comment>
<comment type="catalytic activity">
    <reaction evidence="1">
        <text>(S)-4-amino-5-oxopentanoate + tRNA(Glu) + NADP(+) = L-glutamyl-tRNA(Glu) + NADPH + H(+)</text>
        <dbReference type="Rhea" id="RHEA:12344"/>
        <dbReference type="Rhea" id="RHEA-COMP:9663"/>
        <dbReference type="Rhea" id="RHEA-COMP:9680"/>
        <dbReference type="ChEBI" id="CHEBI:15378"/>
        <dbReference type="ChEBI" id="CHEBI:57501"/>
        <dbReference type="ChEBI" id="CHEBI:57783"/>
        <dbReference type="ChEBI" id="CHEBI:58349"/>
        <dbReference type="ChEBI" id="CHEBI:78442"/>
        <dbReference type="ChEBI" id="CHEBI:78520"/>
        <dbReference type="EC" id="1.2.1.70"/>
    </reaction>
</comment>
<comment type="pathway">
    <text evidence="1">Porphyrin-containing compound metabolism; protoporphyrin-IX biosynthesis; 5-aminolevulinate from L-glutamyl-tRNA(Glu): step 1/2.</text>
</comment>
<comment type="subunit">
    <text evidence="1">Homodimer.</text>
</comment>
<comment type="domain">
    <text evidence="1">Possesses an unusual extended V-shaped dimeric structure with each monomer consisting of three distinct domains arranged along a curved 'spinal' alpha-helix. The N-terminal catalytic domain specifically recognizes the glutamate moiety of the substrate. The second domain is the NADPH-binding domain, and the third C-terminal domain is responsible for dimerization.</text>
</comment>
<comment type="miscellaneous">
    <text evidence="1">During catalysis, the active site Cys acts as a nucleophile attacking the alpha-carbonyl group of tRNA-bound glutamate with the formation of a thioester intermediate between enzyme and glutamate, and the concomitant release of tRNA(Glu). The thioester intermediate is finally reduced by direct hydride transfer from NADPH, to form the product GSA.</text>
</comment>
<comment type="similarity">
    <text evidence="1">Belongs to the glutamyl-tRNA reductase family.</text>
</comment>
<proteinExistence type="inferred from homology"/>
<organism>
    <name type="scientific">Bacillus cereus (strain AH820)</name>
    <dbReference type="NCBI Taxonomy" id="405535"/>
    <lineage>
        <taxon>Bacteria</taxon>
        <taxon>Bacillati</taxon>
        <taxon>Bacillota</taxon>
        <taxon>Bacilli</taxon>
        <taxon>Bacillales</taxon>
        <taxon>Bacillaceae</taxon>
        <taxon>Bacillus</taxon>
        <taxon>Bacillus cereus group</taxon>
    </lineage>
</organism>
<reference key="1">
    <citation type="submission" date="2008-10" db="EMBL/GenBank/DDBJ databases">
        <title>Genome sequence of Bacillus cereus AH820.</title>
        <authorList>
            <person name="Dodson R.J."/>
            <person name="Durkin A.S."/>
            <person name="Rosovitz M.J."/>
            <person name="Rasko D.A."/>
            <person name="Hoffmaster A."/>
            <person name="Ravel J."/>
            <person name="Sutton G."/>
        </authorList>
    </citation>
    <scope>NUCLEOTIDE SEQUENCE [LARGE SCALE GENOMIC DNA]</scope>
    <source>
        <strain>AH820</strain>
    </source>
</reference>
<keyword id="KW-0521">NADP</keyword>
<keyword id="KW-0560">Oxidoreductase</keyword>
<keyword id="KW-0627">Porphyrin biosynthesis</keyword>
<evidence type="ECO:0000255" key="1">
    <source>
        <dbReference type="HAMAP-Rule" id="MF_00087"/>
    </source>
</evidence>
<accession>B7JQ59</accession>
<dbReference type="EC" id="1.2.1.70" evidence="1"/>
<dbReference type="EMBL" id="CP001283">
    <property type="protein sequence ID" value="ACK92243.1"/>
    <property type="molecule type" value="Genomic_DNA"/>
</dbReference>
<dbReference type="RefSeq" id="WP_000547860.1">
    <property type="nucleotide sequence ID" value="NC_011773.1"/>
</dbReference>
<dbReference type="SMR" id="B7JQ59"/>
<dbReference type="GeneID" id="45024338"/>
<dbReference type="KEGG" id="bcu:BCAH820_4553"/>
<dbReference type="HOGENOM" id="CLU_035113_2_2_9"/>
<dbReference type="UniPathway" id="UPA00251">
    <property type="reaction ID" value="UER00316"/>
</dbReference>
<dbReference type="Proteomes" id="UP000001363">
    <property type="component" value="Chromosome"/>
</dbReference>
<dbReference type="GO" id="GO:0008883">
    <property type="term" value="F:glutamyl-tRNA reductase activity"/>
    <property type="evidence" value="ECO:0007669"/>
    <property type="project" value="UniProtKB-UniRule"/>
</dbReference>
<dbReference type="GO" id="GO:0050661">
    <property type="term" value="F:NADP binding"/>
    <property type="evidence" value="ECO:0007669"/>
    <property type="project" value="InterPro"/>
</dbReference>
<dbReference type="GO" id="GO:0006782">
    <property type="term" value="P:protoporphyrinogen IX biosynthetic process"/>
    <property type="evidence" value="ECO:0007669"/>
    <property type="project" value="UniProtKB-UniRule"/>
</dbReference>
<dbReference type="CDD" id="cd05213">
    <property type="entry name" value="NAD_bind_Glutamyl_tRNA_reduct"/>
    <property type="match status" value="1"/>
</dbReference>
<dbReference type="FunFam" id="3.30.460.30:FF:000001">
    <property type="entry name" value="Glutamyl-tRNA reductase"/>
    <property type="match status" value="1"/>
</dbReference>
<dbReference type="FunFam" id="3.40.50.720:FF:000031">
    <property type="entry name" value="Glutamyl-tRNA reductase"/>
    <property type="match status" value="1"/>
</dbReference>
<dbReference type="Gene3D" id="3.30.460.30">
    <property type="entry name" value="Glutamyl-tRNA reductase, N-terminal domain"/>
    <property type="match status" value="1"/>
</dbReference>
<dbReference type="Gene3D" id="3.40.50.720">
    <property type="entry name" value="NAD(P)-binding Rossmann-like Domain"/>
    <property type="match status" value="1"/>
</dbReference>
<dbReference type="HAMAP" id="MF_00087">
    <property type="entry name" value="Glu_tRNA_reductase"/>
    <property type="match status" value="1"/>
</dbReference>
<dbReference type="InterPro" id="IPR000343">
    <property type="entry name" value="4pyrrol_synth_GluRdtase"/>
</dbReference>
<dbReference type="InterPro" id="IPR015896">
    <property type="entry name" value="4pyrrol_synth_GluRdtase_dimer"/>
</dbReference>
<dbReference type="InterPro" id="IPR015895">
    <property type="entry name" value="4pyrrol_synth_GluRdtase_N"/>
</dbReference>
<dbReference type="InterPro" id="IPR018214">
    <property type="entry name" value="GluRdtase_CS"/>
</dbReference>
<dbReference type="InterPro" id="IPR036453">
    <property type="entry name" value="GluRdtase_dimer_dom_sf"/>
</dbReference>
<dbReference type="InterPro" id="IPR036343">
    <property type="entry name" value="GluRdtase_N_sf"/>
</dbReference>
<dbReference type="InterPro" id="IPR036291">
    <property type="entry name" value="NAD(P)-bd_dom_sf"/>
</dbReference>
<dbReference type="InterPro" id="IPR006151">
    <property type="entry name" value="Shikm_DH/Glu-tRNA_Rdtase"/>
</dbReference>
<dbReference type="NCBIfam" id="TIGR01035">
    <property type="entry name" value="hemA"/>
    <property type="match status" value="1"/>
</dbReference>
<dbReference type="PANTHER" id="PTHR43120">
    <property type="entry name" value="GLUTAMYL-TRNA REDUCTASE 1, CHLOROPLASTIC"/>
    <property type="match status" value="1"/>
</dbReference>
<dbReference type="PANTHER" id="PTHR43120:SF1">
    <property type="entry name" value="GLUTAMYL-TRNA REDUCTASE 1, CHLOROPLASTIC"/>
    <property type="match status" value="1"/>
</dbReference>
<dbReference type="Pfam" id="PF00745">
    <property type="entry name" value="GlutR_dimer"/>
    <property type="match status" value="1"/>
</dbReference>
<dbReference type="Pfam" id="PF05201">
    <property type="entry name" value="GlutR_N"/>
    <property type="match status" value="1"/>
</dbReference>
<dbReference type="Pfam" id="PF01488">
    <property type="entry name" value="Shikimate_DH"/>
    <property type="match status" value="1"/>
</dbReference>
<dbReference type="PIRSF" id="PIRSF000445">
    <property type="entry name" value="4pyrrol_synth_GluRdtase"/>
    <property type="match status" value="1"/>
</dbReference>
<dbReference type="SUPFAM" id="SSF69742">
    <property type="entry name" value="Glutamyl tRNA-reductase catalytic, N-terminal domain"/>
    <property type="match status" value="1"/>
</dbReference>
<dbReference type="SUPFAM" id="SSF69075">
    <property type="entry name" value="Glutamyl tRNA-reductase dimerization domain"/>
    <property type="match status" value="1"/>
</dbReference>
<dbReference type="SUPFAM" id="SSF51735">
    <property type="entry name" value="NAD(P)-binding Rossmann-fold domains"/>
    <property type="match status" value="1"/>
</dbReference>
<dbReference type="PROSITE" id="PS00747">
    <property type="entry name" value="GLUTR"/>
    <property type="match status" value="1"/>
</dbReference>
<name>HEM1_BACC0</name>
<feature type="chain" id="PRO_1000190505" description="Glutamyl-tRNA reductase">
    <location>
        <begin position="1"/>
        <end position="444"/>
    </location>
</feature>
<feature type="active site" description="Nucleophile" evidence="1">
    <location>
        <position position="50"/>
    </location>
</feature>
<feature type="binding site" evidence="1">
    <location>
        <begin position="49"/>
        <end position="52"/>
    </location>
    <ligand>
        <name>substrate</name>
    </ligand>
</feature>
<feature type="binding site" evidence="1">
    <location>
        <position position="109"/>
    </location>
    <ligand>
        <name>substrate</name>
    </ligand>
</feature>
<feature type="binding site" evidence="1">
    <location>
        <begin position="114"/>
        <end position="116"/>
    </location>
    <ligand>
        <name>substrate</name>
    </ligand>
</feature>
<feature type="binding site" evidence="1">
    <location>
        <position position="120"/>
    </location>
    <ligand>
        <name>substrate</name>
    </ligand>
</feature>
<feature type="binding site" evidence="1">
    <location>
        <begin position="189"/>
        <end position="194"/>
    </location>
    <ligand>
        <name>NADP(+)</name>
        <dbReference type="ChEBI" id="CHEBI:58349"/>
    </ligand>
</feature>
<feature type="site" description="Important for activity" evidence="1">
    <location>
        <position position="99"/>
    </location>
</feature>
<gene>
    <name evidence="1" type="primary">hemA</name>
    <name type="ordered locus">BCAH820_4553</name>
</gene>